<accession>Q9DG96</accession>
<organism>
    <name type="scientific">Oryzias luzonensis</name>
    <name type="common">Luzon ricefish</name>
    <dbReference type="NCBI Taxonomy" id="104659"/>
    <lineage>
        <taxon>Eukaryota</taxon>
        <taxon>Metazoa</taxon>
        <taxon>Chordata</taxon>
        <taxon>Craniata</taxon>
        <taxon>Vertebrata</taxon>
        <taxon>Euteleostomi</taxon>
        <taxon>Actinopterygii</taxon>
        <taxon>Neopterygii</taxon>
        <taxon>Teleostei</taxon>
        <taxon>Neoteleostei</taxon>
        <taxon>Acanthomorphata</taxon>
        <taxon>Ovalentaria</taxon>
        <taxon>Atherinomorphae</taxon>
        <taxon>Beloniformes</taxon>
        <taxon>Adrianichthyidae</taxon>
        <taxon>Oryziinae</taxon>
        <taxon>Oryzias</taxon>
    </lineage>
</organism>
<comment type="function">
    <text evidence="1">Essential for the control of the cell cycle at the G2/M (mitosis) transition.</text>
</comment>
<comment type="subunit">
    <text evidence="1">Interacts with the CDK1 protein kinase to form a serine/threonine kinase holoenzyme complex also known as maturation promoting factor (MPF). The cyclin subunit imparts substrate specificity to the complex (By similarity).</text>
</comment>
<comment type="developmental stage">
    <text>Accumulates steadily during G2 and is abruptly destroyed at mitosis.</text>
</comment>
<comment type="similarity">
    <text evidence="3">Belongs to the cyclin family. Cyclin AB subfamily.</text>
</comment>
<proteinExistence type="evidence at transcript level"/>
<evidence type="ECO:0000250" key="1"/>
<evidence type="ECO:0000256" key="2">
    <source>
        <dbReference type="SAM" id="MobiDB-lite"/>
    </source>
</evidence>
<evidence type="ECO:0000305" key="3"/>
<reference key="1">
    <citation type="submission" date="2000-10" db="EMBL/GenBank/DDBJ databases">
        <title>cDNA cloning of Cdc2 and cyclin B in medaka species.</title>
        <authorList>
            <person name="Yamashita M."/>
            <person name="Mita K."/>
        </authorList>
    </citation>
    <scope>NUCLEOTIDE SEQUENCE [MRNA]</scope>
    <source>
        <tissue>Ovary</tissue>
    </source>
</reference>
<protein>
    <recommendedName>
        <fullName>G2/mitotic-specific cyclin-B2</fullName>
    </recommendedName>
</protein>
<dbReference type="EMBL" id="AB050467">
    <property type="protein sequence ID" value="BAB17225.1"/>
    <property type="molecule type" value="mRNA"/>
</dbReference>
<dbReference type="SMR" id="Q9DG96"/>
<dbReference type="GO" id="GO:0016538">
    <property type="term" value="F:cyclin-dependent protein serine/threonine kinase regulator activity"/>
    <property type="evidence" value="ECO:0007669"/>
    <property type="project" value="InterPro"/>
</dbReference>
<dbReference type="GO" id="GO:0051301">
    <property type="term" value="P:cell division"/>
    <property type="evidence" value="ECO:0007669"/>
    <property type="project" value="UniProtKB-KW"/>
</dbReference>
<dbReference type="GO" id="GO:0044772">
    <property type="term" value="P:mitotic cell cycle phase transition"/>
    <property type="evidence" value="ECO:0007669"/>
    <property type="project" value="InterPro"/>
</dbReference>
<dbReference type="CDD" id="cd20507">
    <property type="entry name" value="CYCLIN_CCNB1-like_rpt1"/>
    <property type="match status" value="1"/>
</dbReference>
<dbReference type="FunFam" id="1.10.472.10:FF:000001">
    <property type="entry name" value="G2/mitotic-specific cyclin"/>
    <property type="match status" value="1"/>
</dbReference>
<dbReference type="Gene3D" id="1.10.472.10">
    <property type="entry name" value="Cyclin-like"/>
    <property type="match status" value="2"/>
</dbReference>
<dbReference type="InterPro" id="IPR039361">
    <property type="entry name" value="Cyclin"/>
</dbReference>
<dbReference type="InterPro" id="IPR013763">
    <property type="entry name" value="Cyclin-like_dom"/>
</dbReference>
<dbReference type="InterPro" id="IPR036915">
    <property type="entry name" value="Cyclin-like_sf"/>
</dbReference>
<dbReference type="InterPro" id="IPR046965">
    <property type="entry name" value="Cyclin_A/B-like"/>
</dbReference>
<dbReference type="InterPro" id="IPR004367">
    <property type="entry name" value="Cyclin_C-dom"/>
</dbReference>
<dbReference type="InterPro" id="IPR006671">
    <property type="entry name" value="Cyclin_N"/>
</dbReference>
<dbReference type="InterPro" id="IPR048258">
    <property type="entry name" value="Cyclins_cyclin-box"/>
</dbReference>
<dbReference type="PANTHER" id="PTHR10177">
    <property type="entry name" value="CYCLINS"/>
    <property type="match status" value="1"/>
</dbReference>
<dbReference type="Pfam" id="PF02984">
    <property type="entry name" value="Cyclin_C"/>
    <property type="match status" value="1"/>
</dbReference>
<dbReference type="Pfam" id="PF00134">
    <property type="entry name" value="Cyclin_N"/>
    <property type="match status" value="1"/>
</dbReference>
<dbReference type="PIRSF" id="PIRSF001771">
    <property type="entry name" value="Cyclin_A_B_D_E"/>
    <property type="match status" value="1"/>
</dbReference>
<dbReference type="SMART" id="SM00385">
    <property type="entry name" value="CYCLIN"/>
    <property type="match status" value="2"/>
</dbReference>
<dbReference type="SMART" id="SM01332">
    <property type="entry name" value="Cyclin_C"/>
    <property type="match status" value="1"/>
</dbReference>
<dbReference type="SUPFAM" id="SSF47954">
    <property type="entry name" value="Cyclin-like"/>
    <property type="match status" value="2"/>
</dbReference>
<dbReference type="PROSITE" id="PS00292">
    <property type="entry name" value="CYCLINS"/>
    <property type="match status" value="1"/>
</dbReference>
<sequence length="386" mass="43201">MSSVEVVAQQLLAAEHPRRMGKGAAADPRRAALGELTNLNAVAATNGKVGPSKKPSKASCAQKPKPTELVAPMIQTGAAASAPVSAKPCVKEEQLCQAFSEVLLAVQDVDEQDADQPQLCSQYVKDIYKYLHVLEEQQPVRANYMQGYEVTERMRALLVDWLVQVHSRFQLLQETLYLTVAILDRFLQVHPVSRRKLQLVGVTAMLVACKYEEMYTPEVADFSYITDNAFTKSQIVEMEQVILRSLSFQLGRPLPLHFLRRATKVAGADVEKHTLAKYLMELTLLDYHMVHYRPSEVAAAALCLSQLLLDGLPWSLTQQQYSTYEEQHLKPIMRHIAKNVVLVNEGRTKFLAVKKKYSSSKLMKISLIPQLNSSTVKAMAESLHNP</sequence>
<gene>
    <name type="primary">ccnb2</name>
</gene>
<keyword id="KW-0131">Cell cycle</keyword>
<keyword id="KW-0132">Cell division</keyword>
<keyword id="KW-0195">Cyclin</keyword>
<keyword id="KW-0498">Mitosis</keyword>
<feature type="chain" id="PRO_0000080369" description="G2/mitotic-specific cyclin-B2">
    <location>
        <begin position="1"/>
        <end position="386"/>
    </location>
</feature>
<feature type="region of interest" description="Disordered" evidence="2">
    <location>
        <begin position="45"/>
        <end position="64"/>
    </location>
</feature>
<name>CCNB2_ORYLU</name>